<feature type="chain" id="PRO_0000255521" description="Small ribosomal subunit protein uS15">
    <location>
        <begin position="1"/>
        <end position="88"/>
    </location>
</feature>
<evidence type="ECO:0000255" key="1">
    <source>
        <dbReference type="HAMAP-Rule" id="MF_01343"/>
    </source>
</evidence>
<evidence type="ECO:0000305" key="2"/>
<dbReference type="EMBL" id="CP000267">
    <property type="protein sequence ID" value="ABD69221.1"/>
    <property type="molecule type" value="Genomic_DNA"/>
</dbReference>
<dbReference type="RefSeq" id="WP_011463789.1">
    <property type="nucleotide sequence ID" value="NC_007908.1"/>
</dbReference>
<dbReference type="SMR" id="Q21YD2"/>
<dbReference type="STRING" id="338969.Rfer_1488"/>
<dbReference type="KEGG" id="rfr:Rfer_1488"/>
<dbReference type="eggNOG" id="COG0184">
    <property type="taxonomic scope" value="Bacteria"/>
</dbReference>
<dbReference type="HOGENOM" id="CLU_148518_0_0_4"/>
<dbReference type="OrthoDB" id="9799262at2"/>
<dbReference type="Proteomes" id="UP000008332">
    <property type="component" value="Chromosome"/>
</dbReference>
<dbReference type="GO" id="GO:0022627">
    <property type="term" value="C:cytosolic small ribosomal subunit"/>
    <property type="evidence" value="ECO:0007669"/>
    <property type="project" value="TreeGrafter"/>
</dbReference>
<dbReference type="GO" id="GO:0019843">
    <property type="term" value="F:rRNA binding"/>
    <property type="evidence" value="ECO:0007669"/>
    <property type="project" value="UniProtKB-UniRule"/>
</dbReference>
<dbReference type="GO" id="GO:0003735">
    <property type="term" value="F:structural constituent of ribosome"/>
    <property type="evidence" value="ECO:0007669"/>
    <property type="project" value="InterPro"/>
</dbReference>
<dbReference type="GO" id="GO:0006412">
    <property type="term" value="P:translation"/>
    <property type="evidence" value="ECO:0007669"/>
    <property type="project" value="UniProtKB-UniRule"/>
</dbReference>
<dbReference type="CDD" id="cd00353">
    <property type="entry name" value="Ribosomal_S15p_S13e"/>
    <property type="match status" value="1"/>
</dbReference>
<dbReference type="FunFam" id="1.10.287.10:FF:000002">
    <property type="entry name" value="30S ribosomal protein S15"/>
    <property type="match status" value="1"/>
</dbReference>
<dbReference type="Gene3D" id="6.10.250.3130">
    <property type="match status" value="1"/>
</dbReference>
<dbReference type="Gene3D" id="1.10.287.10">
    <property type="entry name" value="S15/NS1, RNA-binding"/>
    <property type="match status" value="1"/>
</dbReference>
<dbReference type="HAMAP" id="MF_01343_B">
    <property type="entry name" value="Ribosomal_uS15_B"/>
    <property type="match status" value="1"/>
</dbReference>
<dbReference type="InterPro" id="IPR000589">
    <property type="entry name" value="Ribosomal_uS15"/>
</dbReference>
<dbReference type="InterPro" id="IPR005290">
    <property type="entry name" value="Ribosomal_uS15_bac-type"/>
</dbReference>
<dbReference type="InterPro" id="IPR009068">
    <property type="entry name" value="uS15_NS1_RNA-bd_sf"/>
</dbReference>
<dbReference type="NCBIfam" id="TIGR00952">
    <property type="entry name" value="S15_bact"/>
    <property type="match status" value="1"/>
</dbReference>
<dbReference type="PANTHER" id="PTHR23321">
    <property type="entry name" value="RIBOSOMAL PROTEIN S15, BACTERIAL AND ORGANELLAR"/>
    <property type="match status" value="1"/>
</dbReference>
<dbReference type="PANTHER" id="PTHR23321:SF26">
    <property type="entry name" value="SMALL RIBOSOMAL SUBUNIT PROTEIN US15M"/>
    <property type="match status" value="1"/>
</dbReference>
<dbReference type="Pfam" id="PF00312">
    <property type="entry name" value="Ribosomal_S15"/>
    <property type="match status" value="1"/>
</dbReference>
<dbReference type="SMART" id="SM01387">
    <property type="entry name" value="Ribosomal_S15"/>
    <property type="match status" value="1"/>
</dbReference>
<dbReference type="SUPFAM" id="SSF47060">
    <property type="entry name" value="S15/NS1 RNA-binding domain"/>
    <property type="match status" value="1"/>
</dbReference>
<dbReference type="PROSITE" id="PS00362">
    <property type="entry name" value="RIBOSOMAL_S15"/>
    <property type="match status" value="1"/>
</dbReference>
<protein>
    <recommendedName>
        <fullName evidence="1">Small ribosomal subunit protein uS15</fullName>
    </recommendedName>
    <alternativeName>
        <fullName evidence="2">30S ribosomal protein S15</fullName>
    </alternativeName>
</protein>
<gene>
    <name evidence="1" type="primary">rpsO</name>
    <name type="ordered locus">Rfer_1488</name>
</gene>
<name>RS15_ALBFT</name>
<sequence length="88" mass="9929">MIASSIKAAVVKDNARQPGDTGSPEVQVALLTARINELMPHFKTHAKDHHGRRGLLRMVSRRRKLLDYLKSKDAERYIALIAKLGLRK</sequence>
<reference key="1">
    <citation type="submission" date="2006-02" db="EMBL/GenBank/DDBJ databases">
        <title>Complete sequence of chromosome of Rhodoferax ferrireducens DSM 15236.</title>
        <authorList>
            <person name="Copeland A."/>
            <person name="Lucas S."/>
            <person name="Lapidus A."/>
            <person name="Barry K."/>
            <person name="Detter J.C."/>
            <person name="Glavina del Rio T."/>
            <person name="Hammon N."/>
            <person name="Israni S."/>
            <person name="Pitluck S."/>
            <person name="Brettin T."/>
            <person name="Bruce D."/>
            <person name="Han C."/>
            <person name="Tapia R."/>
            <person name="Gilna P."/>
            <person name="Kiss H."/>
            <person name="Schmutz J."/>
            <person name="Larimer F."/>
            <person name="Land M."/>
            <person name="Kyrpides N."/>
            <person name="Ivanova N."/>
            <person name="Richardson P."/>
        </authorList>
    </citation>
    <scope>NUCLEOTIDE SEQUENCE [LARGE SCALE GENOMIC DNA]</scope>
    <source>
        <strain>ATCC BAA-621 / DSM 15236 / T118</strain>
    </source>
</reference>
<proteinExistence type="inferred from homology"/>
<keyword id="KW-1185">Reference proteome</keyword>
<keyword id="KW-0687">Ribonucleoprotein</keyword>
<keyword id="KW-0689">Ribosomal protein</keyword>
<keyword id="KW-0694">RNA-binding</keyword>
<keyword id="KW-0699">rRNA-binding</keyword>
<comment type="function">
    <text evidence="1">One of the primary rRNA binding proteins, it binds directly to 16S rRNA where it helps nucleate assembly of the platform of the 30S subunit by binding and bridging several RNA helices of the 16S rRNA.</text>
</comment>
<comment type="function">
    <text evidence="1">Forms an intersubunit bridge (bridge B4) with the 23S rRNA of the 50S subunit in the ribosome.</text>
</comment>
<comment type="subunit">
    <text evidence="1">Part of the 30S ribosomal subunit. Forms a bridge to the 50S subunit in the 70S ribosome, contacting the 23S rRNA.</text>
</comment>
<comment type="similarity">
    <text evidence="1">Belongs to the universal ribosomal protein uS15 family.</text>
</comment>
<accession>Q21YD2</accession>
<organism>
    <name type="scientific">Albidiferax ferrireducens (strain ATCC BAA-621 / DSM 15236 / T118)</name>
    <name type="common">Rhodoferax ferrireducens</name>
    <dbReference type="NCBI Taxonomy" id="338969"/>
    <lineage>
        <taxon>Bacteria</taxon>
        <taxon>Pseudomonadati</taxon>
        <taxon>Pseudomonadota</taxon>
        <taxon>Betaproteobacteria</taxon>
        <taxon>Burkholderiales</taxon>
        <taxon>Comamonadaceae</taxon>
        <taxon>Rhodoferax</taxon>
    </lineage>
</organism>